<reference key="1">
    <citation type="journal article" date="1993" name="Oncogene">
        <title>Molecular cloning and analysis of cDNA encoding the murine c-yes tyrosine protein kinase.</title>
        <authorList>
            <person name="Klages S."/>
            <person name="Adam D."/>
            <person name="Eiseman E."/>
            <person name="Fargnoli J."/>
            <person name="Dymecki S.M."/>
            <person name="Desiderio S.V."/>
            <person name="Bolen J.B."/>
        </authorList>
    </citation>
    <scope>NUCLEOTIDE SEQUENCE [MRNA]</scope>
    <source>
        <tissue>Brain</tissue>
    </source>
</reference>
<reference key="2">
    <citation type="journal article" date="2004" name="Genome Res.">
        <title>The status, quality, and expansion of the NIH full-length cDNA project: the Mammalian Gene Collection (MGC).</title>
        <authorList>
            <consortium name="The MGC Project Team"/>
        </authorList>
    </citation>
    <scope>NUCLEOTIDE SEQUENCE [LARGE SCALE MRNA]</scope>
    <source>
        <strain>Czech II</strain>
        <tissue>Mammary gland</tissue>
    </source>
</reference>
<reference key="3">
    <citation type="journal article" date="1994" name="Gene">
        <title>Protein tyrosine kinases transcribed in a murine thymic medullary epithelial cell line.</title>
        <authorList>
            <person name="Hebert B."/>
            <person name="Bergeron J."/>
            <person name="Tijssen P."/>
            <person name="Potworowski E.F."/>
        </authorList>
    </citation>
    <scope>NUCLEOTIDE SEQUENCE [MRNA] OF 391-458</scope>
</reference>
<reference key="4">
    <citation type="journal article" date="1993" name="EMBO J.">
        <title>Activation of Src family kinases by colony stimulating factor-1, and their association with its receptor.</title>
        <authorList>
            <person name="Courtneidge S.A."/>
            <person name="Dhand R."/>
            <person name="Pilat D."/>
            <person name="Twamley G.M."/>
            <person name="Waterfield M.D."/>
            <person name="Roussel M.F."/>
        </authorList>
    </citation>
    <scope>INTERACTION WITH CSF1R</scope>
</reference>
<reference key="5">
    <citation type="journal article" date="1994" name="Genes Dev.">
        <title>Combined deficiencies of Src, Fyn, and Yes tyrosine kinases in mutant mice.</title>
        <authorList>
            <person name="Stein P.L."/>
            <person name="Vogel H."/>
            <person name="Soriano P."/>
        </authorList>
    </citation>
    <scope>DISRUPTION PHENOTYPE</scope>
</reference>
<reference key="6">
    <citation type="journal article" date="1997" name="J. Biochem.">
        <title>Identification of autophosphorylation sites in c-Yes purified from rat liver plasma membranes.</title>
        <authorList>
            <person name="Ariki M."/>
            <person name="Tanabe O."/>
            <person name="Usui H."/>
            <person name="Hayashi H."/>
            <person name="Inoue R."/>
            <person name="Nishito Y."/>
            <person name="Kagamiyama H."/>
            <person name="Takeda M."/>
        </authorList>
    </citation>
    <scope>PHOSPHORYLATION AT TYR-32</scope>
</reference>
<reference key="7">
    <citation type="journal article" date="2008" name="J. Proteome Res.">
        <title>Large-scale identification and evolution indexing of tyrosine phosphorylation sites from murine brain.</title>
        <authorList>
            <person name="Ballif B.A."/>
            <person name="Carey G.R."/>
            <person name="Sunyaev S.R."/>
            <person name="Gygi S.P."/>
        </authorList>
    </citation>
    <scope>PHOSPHORYLATION [LARGE SCALE ANALYSIS] AT TYR-535</scope>
    <scope>IDENTIFICATION BY MASS SPECTROMETRY [LARGE SCALE ANALYSIS]</scope>
    <source>
        <tissue>Brain</tissue>
    </source>
</reference>
<reference key="8">
    <citation type="journal article" date="2010" name="Cell">
        <title>A tissue-specific atlas of mouse protein phosphorylation and expression.</title>
        <authorList>
            <person name="Huttlin E.L."/>
            <person name="Jedrychowski M.P."/>
            <person name="Elias J.E."/>
            <person name="Goswami T."/>
            <person name="Rad R."/>
            <person name="Beausoleil S.A."/>
            <person name="Villen J."/>
            <person name="Haas W."/>
            <person name="Sowa M.E."/>
            <person name="Gygi S.P."/>
        </authorList>
    </citation>
    <scope>IDENTIFICATION BY MASS SPECTROMETRY [LARGE SCALE ANALYSIS]</scope>
    <source>
        <tissue>Brain</tissue>
        <tissue>Kidney</tissue>
        <tissue>Lung</tissue>
    </source>
</reference>
<reference key="9">
    <citation type="journal article" date="2016" name="Nat. Commun.">
        <title>A phosphotyrosine switch regulates organic cation transporters.</title>
        <authorList>
            <person name="Sprowl J.A."/>
            <person name="Ong S.S."/>
            <person name="Gibson A.A."/>
            <person name="Hu S."/>
            <person name="Du G."/>
            <person name="Lin W."/>
            <person name="Li L."/>
            <person name="Bharill S."/>
            <person name="Ness R.A."/>
            <person name="Stecula A."/>
            <person name="Offer S.M."/>
            <person name="Diasio R.B."/>
            <person name="Nies A.T."/>
            <person name="Schwab M."/>
            <person name="Cavaletti G."/>
            <person name="Schlatter E."/>
            <person name="Ciarimboli G."/>
            <person name="Schellens J.H.M."/>
            <person name="Isacoff E.Y."/>
            <person name="Sali A."/>
            <person name="Chen T."/>
            <person name="Baker S.D."/>
            <person name="Sparreboom A."/>
            <person name="Pabla N."/>
        </authorList>
    </citation>
    <scope>FUNCTION</scope>
    <scope>DISRUPTION PHENOTYPE</scope>
</reference>
<reference key="10">
    <citation type="submission" date="2008-04" db="PDB data bank">
        <title>Solution structure of the SH3_1 domain of Yamaguchi sarcoma viral (v-Yes) oncogene homolog 1.</title>
        <authorList>
            <consortium name="RIKEN structural genomics initiative (RSGI)"/>
        </authorList>
    </citation>
    <scope>STRUCTURE BY NMR OF 62-167</scope>
</reference>
<feature type="initiator methionine" description="Removed">
    <location>
        <position position="1"/>
    </location>
</feature>
<feature type="chain" id="PRO_0000088182" description="Tyrosine-protein kinase Yes">
    <location>
        <begin position="2"/>
        <end position="541"/>
    </location>
</feature>
<feature type="domain" description="SH3" evidence="6">
    <location>
        <begin position="89"/>
        <end position="150"/>
    </location>
</feature>
<feature type="domain" description="SH2" evidence="5">
    <location>
        <begin position="156"/>
        <end position="253"/>
    </location>
</feature>
<feature type="domain" description="Protein kinase" evidence="4">
    <location>
        <begin position="275"/>
        <end position="528"/>
    </location>
</feature>
<feature type="active site" description="Proton acceptor" evidence="4 7">
    <location>
        <position position="394"/>
    </location>
</feature>
<feature type="binding site" evidence="4">
    <location>
        <begin position="281"/>
        <end position="289"/>
    </location>
    <ligand>
        <name>ATP</name>
        <dbReference type="ChEBI" id="CHEBI:30616"/>
    </ligand>
</feature>
<feature type="binding site" evidence="4">
    <location>
        <position position="303"/>
    </location>
    <ligand>
        <name>ATP</name>
        <dbReference type="ChEBI" id="CHEBI:30616"/>
    </ligand>
</feature>
<feature type="modified residue" description="Phosphotyrosine" evidence="11">
    <location>
        <position position="32"/>
    </location>
</feature>
<feature type="modified residue" description="Phosphotyrosine" evidence="2">
    <location>
        <position position="334"/>
    </location>
</feature>
<feature type="modified residue" description="Phosphotyrosine" evidence="2">
    <location>
        <position position="343"/>
    </location>
</feature>
<feature type="modified residue" description="Phosphotyrosine; by autocatalysis" evidence="2">
    <location>
        <position position="424"/>
    </location>
</feature>
<feature type="modified residue" description="Phosphotyrosine" evidence="12">
    <location>
        <position position="535"/>
    </location>
</feature>
<feature type="lipid moiety-binding region" description="N-myristoyl glycine" evidence="1">
    <location>
        <position position="2"/>
    </location>
</feature>
<feature type="lipid moiety-binding region" description="S-palmitoyl cysteine; in membrane form" evidence="1">
    <location>
        <position position="3"/>
    </location>
</feature>
<feature type="strand" evidence="13">
    <location>
        <begin position="93"/>
        <end position="98"/>
    </location>
</feature>
<feature type="strand" evidence="13">
    <location>
        <begin position="115"/>
        <end position="120"/>
    </location>
</feature>
<feature type="strand" evidence="13">
    <location>
        <begin position="127"/>
        <end position="134"/>
    </location>
</feature>
<feature type="strand" evidence="13">
    <location>
        <begin position="137"/>
        <end position="140"/>
    </location>
</feature>
<feature type="turn" evidence="13">
    <location>
        <begin position="142"/>
        <end position="144"/>
    </location>
</feature>
<feature type="strand" evidence="13">
    <location>
        <begin position="145"/>
        <end position="150"/>
    </location>
</feature>
<feature type="turn" evidence="13">
    <location>
        <begin position="152"/>
        <end position="154"/>
    </location>
</feature>
<feature type="strand" evidence="14">
    <location>
        <begin position="157"/>
        <end position="160"/>
    </location>
</feature>
<feature type="helix" evidence="14">
    <location>
        <begin position="163"/>
        <end position="170"/>
    </location>
</feature>
<feature type="strand" evidence="14">
    <location>
        <begin position="180"/>
        <end position="184"/>
    </location>
</feature>
<feature type="strand" evidence="14">
    <location>
        <begin position="186"/>
        <end position="188"/>
    </location>
</feature>
<feature type="strand" evidence="14">
    <location>
        <begin position="192"/>
        <end position="200"/>
    </location>
</feature>
<feature type="turn" evidence="14">
    <location>
        <begin position="201"/>
        <end position="203"/>
    </location>
</feature>
<feature type="strand" evidence="14">
    <location>
        <begin position="204"/>
        <end position="214"/>
    </location>
</feature>
<feature type="strand" evidence="14">
    <location>
        <begin position="216"/>
        <end position="218"/>
    </location>
</feature>
<feature type="strand" evidence="14">
    <location>
        <begin position="220"/>
        <end position="223"/>
    </location>
</feature>
<feature type="strand" evidence="14">
    <location>
        <begin position="226"/>
        <end position="230"/>
    </location>
</feature>
<feature type="helix" evidence="14">
    <location>
        <begin position="231"/>
        <end position="240"/>
    </location>
</feature>
<feature type="strand" evidence="14">
    <location>
        <begin position="245"/>
        <end position="247"/>
    </location>
</feature>
<sequence>MGCIKSKENKSPAIKYTPENLTEPVSPSASHYGVEHATVAPTSSTKGASVNFNSLSMTPFGGSSGVTPFGGASSSFSVVSSSYPTGLTGGVTIFVALYDYEARTTEDLSFKKGERFQIINNTEGDWWEARSIATGKSGYIPSNYVVPADSIQAEEWYFGKMGRKDAERLLLNPGNQRGIFLVRESETTKGAYSLSIRDWDEVRGDNVKHYKIRKLDNGGYYITTRAQFDTLQKLVKHYTEHADGLCHKLTTVCPTVKPQTQGLAKDAWEIPRESLRLEVKLGQGCFGEVWMGTWNGTTKVAIKTLKPGTMMPEAFLQEAQIMKKLRHDKLVPLYAVVSEEPIYIVTEFMSKGSLLDFLKEGDGKYLKLPQLVDMAAQIADGMAYIERMNYIHRDLRAANILVGENLICKIADFGLARLIEDNEYTARQGAKFPIKWTAPEAALYGRFTIKSDVWSFGILQTELVTKGRVPYPGMVNREVLEQVERGYRMPCPQGCPESLHELMNLCWKKDPDERPTFEYIQSFLEDYFTATEPQYQPGENL</sequence>
<keyword id="KW-0002">3D-structure</keyword>
<keyword id="KW-0067">ATP-binding</keyword>
<keyword id="KW-0965">Cell junction</keyword>
<keyword id="KW-1003">Cell membrane</keyword>
<keyword id="KW-0963">Cytoplasm</keyword>
<keyword id="KW-0206">Cytoskeleton</keyword>
<keyword id="KW-0418">Kinase</keyword>
<keyword id="KW-0449">Lipoprotein</keyword>
<keyword id="KW-0472">Membrane</keyword>
<keyword id="KW-0519">Myristate</keyword>
<keyword id="KW-0547">Nucleotide-binding</keyword>
<keyword id="KW-0564">Palmitate</keyword>
<keyword id="KW-0597">Phosphoprotein</keyword>
<keyword id="KW-0656">Proto-oncogene</keyword>
<keyword id="KW-1185">Reference proteome</keyword>
<keyword id="KW-0727">SH2 domain</keyword>
<keyword id="KW-0728">SH3 domain</keyword>
<keyword id="KW-0808">Transferase</keyword>
<keyword id="KW-0829">Tyrosine-protein kinase</keyword>
<comment type="function">
    <text evidence="1 8">Non-receptor protein tyrosine kinase that is involved in the regulation of cell growth and survival, apoptosis, cell-cell adhesion, cytoskeleton remodeling, and differentiation. Stimulation by receptor tyrosine kinases (RTKs) including EGFR, PDGFR, CSF1R and FGFR leads to recruitment of YES1 to the phosphorylated receptor, and activation and phosphorylation of downstream substrates. Upon EGFR activation, promotes the phosphorylation of PARD3 to favor epithelial tight junction assembly. Participates in the phosphorylation of specific junctional components such as CTNND1 by stimulating the FYN and FER tyrosine kinases at cell-cell contacts. Upon T-cell stimulation by CXCL12, phosphorylates collapsin response mediator protein 2/DPYSL2 and induces T-cell migration. Participates in CD95L/FASLG signaling pathway and mediates AKT-mediated cell migration. Plays a role in cell cycle progression by phosphorylating the cyclin dependent kinase 4/CDK4 thus regulating the G1 phase. Also involved in G2/M progression and cytokinesis (By similarity). Catalyzes phosphorylation of organic cation transporter OCT2 which induces its transport activity (PubMed:26979622).</text>
</comment>
<comment type="catalytic activity">
    <reaction evidence="7">
        <text>L-tyrosyl-[protein] + ATP = O-phospho-L-tyrosyl-[protein] + ADP + H(+)</text>
        <dbReference type="Rhea" id="RHEA:10596"/>
        <dbReference type="Rhea" id="RHEA-COMP:10136"/>
        <dbReference type="Rhea" id="RHEA-COMP:20101"/>
        <dbReference type="ChEBI" id="CHEBI:15378"/>
        <dbReference type="ChEBI" id="CHEBI:30616"/>
        <dbReference type="ChEBI" id="CHEBI:46858"/>
        <dbReference type="ChEBI" id="CHEBI:61978"/>
        <dbReference type="ChEBI" id="CHEBI:456216"/>
        <dbReference type="EC" id="2.7.10.2"/>
    </reaction>
</comment>
<comment type="subunit">
    <text evidence="1 2 3 9">Interacts with YAP1. Interacts with FASLG. Interacts with CTNND1; this interaction allows YES1-mediated activation of FYN and FER and subsequent phosphorylation of CTNND1 (By similarity). Interacts with CSF1R. Interacts with IL6ST/gp130 (By similarity). Interacts with SCRIB, when YES1 is in a closed conformation; the interaction facilitates YES1 autophosphorylation (By similarity).</text>
</comment>
<comment type="subcellular location">
    <subcellularLocation>
        <location evidence="1">Cell membrane</location>
    </subcellularLocation>
    <subcellularLocation>
        <location evidence="1">Cytoplasm</location>
        <location evidence="1">Cytoskeleton</location>
        <location evidence="1">Microtubule organizing center</location>
        <location evidence="1">Centrosome</location>
    </subcellularLocation>
    <subcellularLocation>
        <location evidence="1">Cytoplasm</location>
        <location evidence="1">Cytosol</location>
    </subcellularLocation>
    <subcellularLocation>
        <location evidence="3">Cell junction</location>
    </subcellularLocation>
    <text evidence="1 3">Newly synthesized protein initially accumulates in the Golgi region and traffics to the plasma membrane through the exocytic pathway. Localized to small puncta throughout the cytoplasm and cell membrane when in the presence of SNAIL1 (By similarity).</text>
</comment>
<comment type="PTM">
    <text evidence="2 3">Phosphorylated (By similarity). Phosphorylation by CSK on the C-terminal tail maintains the enzyme in an inactive state (By similarity). Autophosphorylation at Tyr-424 maintains enzyme activity by blocking CSK-mediated inhibition (By similarity).</text>
</comment>
<comment type="PTM">
    <text evidence="1">Palmitoylation at Cys-3 promotes membrane localization.</text>
</comment>
<comment type="disruption phenotype">
    <text evidence="8 10">Knouckout mice show reduced OCT2 tyrosine phosphorylation and reduced OCT2-mediated TEA renal secretion (PubMed:26979622). Knouckout mice are protected from oxaliplatin-induced acute sensory neuropathy (PubMed:26979622). Mice are viable, fertile, and display no apparent phenotypes. This lack of phenotype may be attributable to compensatory roles of the other SRC-family members.</text>
</comment>
<comment type="similarity">
    <text evidence="4">Belongs to the protein kinase superfamily. Tyr protein kinase family. SRC subfamily.</text>
</comment>
<dbReference type="EC" id="2.7.10.2"/>
<dbReference type="EMBL" id="X67677">
    <property type="protein sequence ID" value="CAA47909.1"/>
    <property type="molecule type" value="mRNA"/>
</dbReference>
<dbReference type="EMBL" id="BC010594">
    <property type="protein sequence ID" value="AAH10594.1"/>
    <property type="molecule type" value="mRNA"/>
</dbReference>
<dbReference type="EMBL" id="L25762">
    <property type="protein sequence ID" value="AAA40020.1"/>
    <property type="molecule type" value="mRNA"/>
</dbReference>
<dbReference type="CCDS" id="CCDS39061.1"/>
<dbReference type="PIR" id="I48318">
    <property type="entry name" value="S31645"/>
</dbReference>
<dbReference type="RefSeq" id="NP_001192061.1">
    <property type="nucleotide sequence ID" value="NM_001205132.1"/>
</dbReference>
<dbReference type="RefSeq" id="NP_001192062.1">
    <property type="nucleotide sequence ID" value="NM_001205133.1"/>
</dbReference>
<dbReference type="RefSeq" id="NP_033561.1">
    <property type="nucleotide sequence ID" value="NM_009535.3"/>
</dbReference>
<dbReference type="PDB" id="2YT6">
    <property type="method" value="NMR"/>
    <property type="chains" value="A=71-167"/>
</dbReference>
<dbReference type="PDB" id="5MTJ">
    <property type="method" value="X-ray"/>
    <property type="resolution" value="1.95 A"/>
    <property type="chains" value="A=147-260"/>
</dbReference>
<dbReference type="PDBsum" id="2YT6"/>
<dbReference type="PDBsum" id="5MTJ"/>
<dbReference type="SMR" id="Q04736"/>
<dbReference type="BioGRID" id="204615">
    <property type="interactions" value="8"/>
</dbReference>
<dbReference type="CORUM" id="Q04736"/>
<dbReference type="FunCoup" id="Q04736">
    <property type="interactions" value="855"/>
</dbReference>
<dbReference type="IntAct" id="Q04736">
    <property type="interactions" value="4"/>
</dbReference>
<dbReference type="MINT" id="Q04736"/>
<dbReference type="STRING" id="10090.ENSMUSP00000072154"/>
<dbReference type="GlyGen" id="Q04736">
    <property type="glycosylation" value="4 sites, 1 N-linked glycan (1 site), 1 O-linked glycan (2 sites)"/>
</dbReference>
<dbReference type="iPTMnet" id="Q04736"/>
<dbReference type="PhosphoSitePlus" id="Q04736"/>
<dbReference type="SwissPalm" id="Q04736"/>
<dbReference type="jPOST" id="Q04736"/>
<dbReference type="PaxDb" id="10090-ENSMUSP00000072154"/>
<dbReference type="PeptideAtlas" id="Q04736"/>
<dbReference type="ProteomicsDB" id="299631"/>
<dbReference type="Pumba" id="Q04736"/>
<dbReference type="ABCD" id="Q04736">
    <property type="antibodies" value="4 sequenced antibodies"/>
</dbReference>
<dbReference type="Antibodypedia" id="3819">
    <property type="antibodies" value="495 antibodies from 37 providers"/>
</dbReference>
<dbReference type="DNASU" id="22612"/>
<dbReference type="Ensembl" id="ENSMUST00000072311.13">
    <property type="protein sequence ID" value="ENSMUSP00000072154.7"/>
    <property type="gene ID" value="ENSMUSG00000014932.16"/>
</dbReference>
<dbReference type="Ensembl" id="ENSMUST00000168707.6">
    <property type="protein sequence ID" value="ENSMUSP00000132161.3"/>
    <property type="gene ID" value="ENSMUSG00000014932.16"/>
</dbReference>
<dbReference type="Ensembl" id="ENSMUST00000202543.4">
    <property type="protein sequence ID" value="ENSMUSP00000144001.2"/>
    <property type="gene ID" value="ENSMUSG00000014932.16"/>
</dbReference>
<dbReference type="GeneID" id="22612"/>
<dbReference type="KEGG" id="mmu:22612"/>
<dbReference type="UCSC" id="uc008wzs.2">
    <property type="organism name" value="mouse"/>
</dbReference>
<dbReference type="AGR" id="MGI:99147"/>
<dbReference type="CTD" id="7525"/>
<dbReference type="MGI" id="MGI:99147">
    <property type="gene designation" value="Yes1"/>
</dbReference>
<dbReference type="VEuPathDB" id="HostDB:ENSMUSG00000014932"/>
<dbReference type="eggNOG" id="KOG0197">
    <property type="taxonomic scope" value="Eukaryota"/>
</dbReference>
<dbReference type="GeneTree" id="ENSGT00940000154920"/>
<dbReference type="InParanoid" id="Q04736"/>
<dbReference type="OMA" id="RTENTPD"/>
<dbReference type="OrthoDB" id="4062651at2759"/>
<dbReference type="PhylomeDB" id="Q04736"/>
<dbReference type="TreeFam" id="TF351634"/>
<dbReference type="BRENDA" id="2.7.10.2">
    <property type="organism ID" value="3474"/>
</dbReference>
<dbReference type="Reactome" id="R-MMU-1227986">
    <property type="pathway name" value="Signaling by ERBB2"/>
</dbReference>
<dbReference type="Reactome" id="R-MMU-1433557">
    <property type="pathway name" value="Signaling by SCF-KIT"/>
</dbReference>
<dbReference type="Reactome" id="R-MMU-1433559">
    <property type="pathway name" value="Regulation of KIT signaling"/>
</dbReference>
<dbReference type="Reactome" id="R-MMU-2029481">
    <property type="pathway name" value="FCGR activation"/>
</dbReference>
<dbReference type="Reactome" id="R-MMU-210990">
    <property type="pathway name" value="PECAM1 interactions"/>
</dbReference>
<dbReference type="Reactome" id="R-MMU-389356">
    <property type="pathway name" value="Co-stimulation by CD28"/>
</dbReference>
<dbReference type="Reactome" id="R-MMU-389513">
    <property type="pathway name" value="Co-inhibition by CTLA4"/>
</dbReference>
<dbReference type="Reactome" id="R-MMU-3928662">
    <property type="pathway name" value="EPHB-mediated forward signaling"/>
</dbReference>
<dbReference type="Reactome" id="R-MMU-3928663">
    <property type="pathway name" value="EPHA-mediated growth cone collapse"/>
</dbReference>
<dbReference type="Reactome" id="R-MMU-3928665">
    <property type="pathway name" value="EPH-ephrin mediated repulsion of cells"/>
</dbReference>
<dbReference type="Reactome" id="R-MMU-912631">
    <property type="pathway name" value="Regulation of signaling by CBL"/>
</dbReference>
<dbReference type="BioGRID-ORCS" id="22612">
    <property type="hits" value="3 hits in 80 CRISPR screens"/>
</dbReference>
<dbReference type="CD-CODE" id="CE726F99">
    <property type="entry name" value="Postsynaptic density"/>
</dbReference>
<dbReference type="ChiTaRS" id="Yes1">
    <property type="organism name" value="mouse"/>
</dbReference>
<dbReference type="EvolutionaryTrace" id="Q04736"/>
<dbReference type="PRO" id="PR:Q04736"/>
<dbReference type="Proteomes" id="UP000000589">
    <property type="component" value="Chromosome 5"/>
</dbReference>
<dbReference type="RNAct" id="Q04736">
    <property type="molecule type" value="protein"/>
</dbReference>
<dbReference type="Bgee" id="ENSMUSG00000014932">
    <property type="expression patterns" value="Expressed in lumbar dorsal root ganglion and 248 other cell types or tissues"/>
</dbReference>
<dbReference type="ExpressionAtlas" id="Q04736">
    <property type="expression patterns" value="baseline and differential"/>
</dbReference>
<dbReference type="GO" id="GO:0005884">
    <property type="term" value="C:actin filament"/>
    <property type="evidence" value="ECO:0000314"/>
    <property type="project" value="MGI"/>
</dbReference>
<dbReference type="GO" id="GO:0070161">
    <property type="term" value="C:anchoring junction"/>
    <property type="evidence" value="ECO:0007669"/>
    <property type="project" value="UniProtKB-SubCell"/>
</dbReference>
<dbReference type="GO" id="GO:0005813">
    <property type="term" value="C:centrosome"/>
    <property type="evidence" value="ECO:0007669"/>
    <property type="project" value="UniProtKB-SubCell"/>
</dbReference>
<dbReference type="GO" id="GO:0005829">
    <property type="term" value="C:cytosol"/>
    <property type="evidence" value="ECO:0000304"/>
    <property type="project" value="Reactome"/>
</dbReference>
<dbReference type="GO" id="GO:0005794">
    <property type="term" value="C:Golgi apparatus"/>
    <property type="evidence" value="ECO:0007669"/>
    <property type="project" value="Ensembl"/>
</dbReference>
<dbReference type="GO" id="GO:0005886">
    <property type="term" value="C:plasma membrane"/>
    <property type="evidence" value="ECO:0000314"/>
    <property type="project" value="MGI"/>
</dbReference>
<dbReference type="GO" id="GO:0005524">
    <property type="term" value="F:ATP binding"/>
    <property type="evidence" value="ECO:0007669"/>
    <property type="project" value="UniProtKB-KW"/>
</dbReference>
<dbReference type="GO" id="GO:0019899">
    <property type="term" value="F:enzyme binding"/>
    <property type="evidence" value="ECO:0007669"/>
    <property type="project" value="Ensembl"/>
</dbReference>
<dbReference type="GO" id="GO:0004715">
    <property type="term" value="F:non-membrane spanning protein tyrosine kinase activity"/>
    <property type="evidence" value="ECO:0007669"/>
    <property type="project" value="UniProtKB-EC"/>
</dbReference>
<dbReference type="GO" id="GO:0001784">
    <property type="term" value="F:phosphotyrosine residue binding"/>
    <property type="evidence" value="ECO:0007669"/>
    <property type="project" value="Ensembl"/>
</dbReference>
<dbReference type="GO" id="GO:0004713">
    <property type="term" value="F:protein tyrosine kinase activity"/>
    <property type="evidence" value="ECO:0000314"/>
    <property type="project" value="UniProtKB"/>
</dbReference>
<dbReference type="GO" id="GO:0044325">
    <property type="term" value="F:transmembrane transporter binding"/>
    <property type="evidence" value="ECO:0007669"/>
    <property type="project" value="Ensembl"/>
</dbReference>
<dbReference type="GO" id="GO:0036120">
    <property type="term" value="P:cellular response to platelet-derived growth factor stimulus"/>
    <property type="evidence" value="ECO:0000314"/>
    <property type="project" value="MGI"/>
</dbReference>
<dbReference type="GO" id="GO:0071300">
    <property type="term" value="P:cellular response to retinoic acid"/>
    <property type="evidence" value="ECO:0000314"/>
    <property type="project" value="MGI"/>
</dbReference>
<dbReference type="GO" id="GO:0071560">
    <property type="term" value="P:cellular response to transforming growth factor beta stimulus"/>
    <property type="evidence" value="ECO:0000316"/>
    <property type="project" value="MGI"/>
</dbReference>
<dbReference type="GO" id="GO:0045944">
    <property type="term" value="P:positive regulation of transcription by RNA polymerase II"/>
    <property type="evidence" value="ECO:0000316"/>
    <property type="project" value="MGI"/>
</dbReference>
<dbReference type="GO" id="GO:0010827">
    <property type="term" value="P:regulation of D-glucose transmembrane transport"/>
    <property type="evidence" value="ECO:0000314"/>
    <property type="project" value="MGI"/>
</dbReference>
<dbReference type="CDD" id="cd05069">
    <property type="entry name" value="PTKc_Yes"/>
    <property type="match status" value="1"/>
</dbReference>
<dbReference type="CDD" id="cd09933">
    <property type="entry name" value="SH2_Src_family"/>
    <property type="match status" value="1"/>
</dbReference>
<dbReference type="CDD" id="cd12007">
    <property type="entry name" value="SH3_Yes"/>
    <property type="match status" value="1"/>
</dbReference>
<dbReference type="FunFam" id="1.10.510.10:FF:000553">
    <property type="entry name" value="Tyrosine-protein kinase"/>
    <property type="match status" value="1"/>
</dbReference>
<dbReference type="FunFam" id="2.30.30.40:FF:000022">
    <property type="entry name" value="Tyrosine-protein kinase"/>
    <property type="match status" value="1"/>
</dbReference>
<dbReference type="FunFam" id="3.30.200.20:FF:000016">
    <property type="entry name" value="Tyrosine-protein kinase"/>
    <property type="match status" value="1"/>
</dbReference>
<dbReference type="FunFam" id="3.30.505.10:FF:000001">
    <property type="entry name" value="Tyrosine-protein kinase"/>
    <property type="match status" value="1"/>
</dbReference>
<dbReference type="Gene3D" id="3.30.200.20">
    <property type="entry name" value="Phosphorylase Kinase, domain 1"/>
    <property type="match status" value="1"/>
</dbReference>
<dbReference type="Gene3D" id="3.30.505.10">
    <property type="entry name" value="SH2 domain"/>
    <property type="match status" value="1"/>
</dbReference>
<dbReference type="Gene3D" id="2.30.30.40">
    <property type="entry name" value="SH3 Domains"/>
    <property type="match status" value="1"/>
</dbReference>
<dbReference type="Gene3D" id="1.10.510.10">
    <property type="entry name" value="Transferase(Phosphotransferase) domain 1"/>
    <property type="match status" value="1"/>
</dbReference>
<dbReference type="InterPro" id="IPR011009">
    <property type="entry name" value="Kinase-like_dom_sf"/>
</dbReference>
<dbReference type="InterPro" id="IPR050198">
    <property type="entry name" value="Non-receptor_tyrosine_kinases"/>
</dbReference>
<dbReference type="InterPro" id="IPR000719">
    <property type="entry name" value="Prot_kinase_dom"/>
</dbReference>
<dbReference type="InterPro" id="IPR017441">
    <property type="entry name" value="Protein_kinase_ATP_BS"/>
</dbReference>
<dbReference type="InterPro" id="IPR001245">
    <property type="entry name" value="Ser-Thr/Tyr_kinase_cat_dom"/>
</dbReference>
<dbReference type="InterPro" id="IPR000980">
    <property type="entry name" value="SH2"/>
</dbReference>
<dbReference type="InterPro" id="IPR036860">
    <property type="entry name" value="SH2_dom_sf"/>
</dbReference>
<dbReference type="InterPro" id="IPR036028">
    <property type="entry name" value="SH3-like_dom_sf"/>
</dbReference>
<dbReference type="InterPro" id="IPR001452">
    <property type="entry name" value="SH3_domain"/>
</dbReference>
<dbReference type="InterPro" id="IPR008266">
    <property type="entry name" value="Tyr_kinase_AS"/>
</dbReference>
<dbReference type="InterPro" id="IPR020635">
    <property type="entry name" value="Tyr_kinase_cat_dom"/>
</dbReference>
<dbReference type="InterPro" id="IPR035751">
    <property type="entry name" value="Yes_SH3"/>
</dbReference>
<dbReference type="PANTHER" id="PTHR24418">
    <property type="entry name" value="TYROSINE-PROTEIN KINASE"/>
    <property type="match status" value="1"/>
</dbReference>
<dbReference type="Pfam" id="PF07714">
    <property type="entry name" value="PK_Tyr_Ser-Thr"/>
    <property type="match status" value="1"/>
</dbReference>
<dbReference type="Pfam" id="PF00017">
    <property type="entry name" value="SH2"/>
    <property type="match status" value="1"/>
</dbReference>
<dbReference type="Pfam" id="PF00018">
    <property type="entry name" value="SH3_1"/>
    <property type="match status" value="1"/>
</dbReference>
<dbReference type="PRINTS" id="PR00401">
    <property type="entry name" value="SH2DOMAIN"/>
</dbReference>
<dbReference type="PRINTS" id="PR00452">
    <property type="entry name" value="SH3DOMAIN"/>
</dbReference>
<dbReference type="PRINTS" id="PR00109">
    <property type="entry name" value="TYRKINASE"/>
</dbReference>
<dbReference type="SMART" id="SM00252">
    <property type="entry name" value="SH2"/>
    <property type="match status" value="1"/>
</dbReference>
<dbReference type="SMART" id="SM00326">
    <property type="entry name" value="SH3"/>
    <property type="match status" value="1"/>
</dbReference>
<dbReference type="SMART" id="SM00219">
    <property type="entry name" value="TyrKc"/>
    <property type="match status" value="1"/>
</dbReference>
<dbReference type="SUPFAM" id="SSF56112">
    <property type="entry name" value="Protein kinase-like (PK-like)"/>
    <property type="match status" value="1"/>
</dbReference>
<dbReference type="SUPFAM" id="SSF55550">
    <property type="entry name" value="SH2 domain"/>
    <property type="match status" value="1"/>
</dbReference>
<dbReference type="SUPFAM" id="SSF50044">
    <property type="entry name" value="SH3-domain"/>
    <property type="match status" value="1"/>
</dbReference>
<dbReference type="PROSITE" id="PS00107">
    <property type="entry name" value="PROTEIN_KINASE_ATP"/>
    <property type="match status" value="1"/>
</dbReference>
<dbReference type="PROSITE" id="PS50011">
    <property type="entry name" value="PROTEIN_KINASE_DOM"/>
    <property type="match status" value="1"/>
</dbReference>
<dbReference type="PROSITE" id="PS00109">
    <property type="entry name" value="PROTEIN_KINASE_TYR"/>
    <property type="match status" value="1"/>
</dbReference>
<dbReference type="PROSITE" id="PS50001">
    <property type="entry name" value="SH2"/>
    <property type="match status" value="1"/>
</dbReference>
<dbReference type="PROSITE" id="PS50002">
    <property type="entry name" value="SH3"/>
    <property type="match status" value="1"/>
</dbReference>
<evidence type="ECO:0000250" key="1"/>
<evidence type="ECO:0000250" key="2">
    <source>
        <dbReference type="UniProtKB" id="P07947"/>
    </source>
</evidence>
<evidence type="ECO:0000250" key="3">
    <source>
        <dbReference type="UniProtKB" id="Q28923"/>
    </source>
</evidence>
<evidence type="ECO:0000255" key="4">
    <source>
        <dbReference type="PROSITE-ProRule" id="PRU00159"/>
    </source>
</evidence>
<evidence type="ECO:0000255" key="5">
    <source>
        <dbReference type="PROSITE-ProRule" id="PRU00191"/>
    </source>
</evidence>
<evidence type="ECO:0000255" key="6">
    <source>
        <dbReference type="PROSITE-ProRule" id="PRU00192"/>
    </source>
</evidence>
<evidence type="ECO:0000255" key="7">
    <source>
        <dbReference type="PROSITE-ProRule" id="PRU10028"/>
    </source>
</evidence>
<evidence type="ECO:0000269" key="8">
    <source>
    </source>
</evidence>
<evidence type="ECO:0000269" key="9">
    <source>
    </source>
</evidence>
<evidence type="ECO:0000269" key="10">
    <source>
    </source>
</evidence>
<evidence type="ECO:0000269" key="11">
    <source>
    </source>
</evidence>
<evidence type="ECO:0007744" key="12">
    <source>
    </source>
</evidence>
<evidence type="ECO:0007829" key="13">
    <source>
        <dbReference type="PDB" id="2YT6"/>
    </source>
</evidence>
<evidence type="ECO:0007829" key="14">
    <source>
        <dbReference type="PDB" id="5MTJ"/>
    </source>
</evidence>
<proteinExistence type="evidence at protein level"/>
<name>YES_MOUSE</name>
<organism>
    <name type="scientific">Mus musculus</name>
    <name type="common">Mouse</name>
    <dbReference type="NCBI Taxonomy" id="10090"/>
    <lineage>
        <taxon>Eukaryota</taxon>
        <taxon>Metazoa</taxon>
        <taxon>Chordata</taxon>
        <taxon>Craniata</taxon>
        <taxon>Vertebrata</taxon>
        <taxon>Euteleostomi</taxon>
        <taxon>Mammalia</taxon>
        <taxon>Eutheria</taxon>
        <taxon>Euarchontoglires</taxon>
        <taxon>Glires</taxon>
        <taxon>Rodentia</taxon>
        <taxon>Myomorpha</taxon>
        <taxon>Muroidea</taxon>
        <taxon>Muridae</taxon>
        <taxon>Murinae</taxon>
        <taxon>Mus</taxon>
        <taxon>Mus</taxon>
    </lineage>
</organism>
<accession>Q04736</accession>
<gene>
    <name type="primary">Yes1</name>
    <name type="synonym">Yes</name>
</gene>
<protein>
    <recommendedName>
        <fullName>Tyrosine-protein kinase Yes</fullName>
        <ecNumber>2.7.10.2</ecNumber>
    </recommendedName>
    <alternativeName>
        <fullName>Proto-oncogene c-Yes</fullName>
    </alternativeName>
    <alternativeName>
        <fullName>p61-Yes</fullName>
    </alternativeName>
</protein>